<evidence type="ECO:0000255" key="1">
    <source>
        <dbReference type="HAMAP-Rule" id="MF_00133"/>
    </source>
</evidence>
<organism>
    <name type="scientific">Shewanella putrefaciens (strain CN-32 / ATCC BAA-453)</name>
    <dbReference type="NCBI Taxonomy" id="319224"/>
    <lineage>
        <taxon>Bacteria</taxon>
        <taxon>Pseudomonadati</taxon>
        <taxon>Pseudomonadota</taxon>
        <taxon>Gammaproteobacteria</taxon>
        <taxon>Alteromonadales</taxon>
        <taxon>Shewanellaceae</taxon>
        <taxon>Shewanella</taxon>
    </lineage>
</organism>
<protein>
    <recommendedName>
        <fullName evidence="1">Tryptophan synthase beta chain</fullName>
        <ecNumber evidence="1">4.2.1.20</ecNumber>
    </recommendedName>
</protein>
<gene>
    <name evidence="1" type="primary">trpB</name>
    <name type="ordered locus">Sputcn32_2407</name>
</gene>
<dbReference type="EC" id="4.2.1.20" evidence="1"/>
<dbReference type="EMBL" id="CP000681">
    <property type="protein sequence ID" value="ABP76128.1"/>
    <property type="molecule type" value="Genomic_DNA"/>
</dbReference>
<dbReference type="SMR" id="A4Y845"/>
<dbReference type="STRING" id="319224.Sputcn32_2407"/>
<dbReference type="KEGG" id="spc:Sputcn32_2407"/>
<dbReference type="eggNOG" id="COG0133">
    <property type="taxonomic scope" value="Bacteria"/>
</dbReference>
<dbReference type="HOGENOM" id="CLU_016734_3_1_6"/>
<dbReference type="UniPathway" id="UPA00035">
    <property type="reaction ID" value="UER00044"/>
</dbReference>
<dbReference type="GO" id="GO:0005737">
    <property type="term" value="C:cytoplasm"/>
    <property type="evidence" value="ECO:0007669"/>
    <property type="project" value="TreeGrafter"/>
</dbReference>
<dbReference type="GO" id="GO:0004834">
    <property type="term" value="F:tryptophan synthase activity"/>
    <property type="evidence" value="ECO:0007669"/>
    <property type="project" value="UniProtKB-UniRule"/>
</dbReference>
<dbReference type="CDD" id="cd06446">
    <property type="entry name" value="Trp-synth_B"/>
    <property type="match status" value="1"/>
</dbReference>
<dbReference type="FunFam" id="3.40.50.1100:FF:000001">
    <property type="entry name" value="Tryptophan synthase beta chain"/>
    <property type="match status" value="1"/>
</dbReference>
<dbReference type="FunFam" id="3.40.50.1100:FF:000004">
    <property type="entry name" value="Tryptophan synthase beta chain"/>
    <property type="match status" value="1"/>
</dbReference>
<dbReference type="Gene3D" id="3.40.50.1100">
    <property type="match status" value="2"/>
</dbReference>
<dbReference type="HAMAP" id="MF_00133">
    <property type="entry name" value="Trp_synth_beta"/>
    <property type="match status" value="1"/>
</dbReference>
<dbReference type="InterPro" id="IPR006653">
    <property type="entry name" value="Trp_synth_b_CS"/>
</dbReference>
<dbReference type="InterPro" id="IPR006654">
    <property type="entry name" value="Trp_synth_beta"/>
</dbReference>
<dbReference type="InterPro" id="IPR023026">
    <property type="entry name" value="Trp_synth_beta/beta-like"/>
</dbReference>
<dbReference type="InterPro" id="IPR001926">
    <property type="entry name" value="TrpB-like_PALP"/>
</dbReference>
<dbReference type="InterPro" id="IPR036052">
    <property type="entry name" value="TrpB-like_PALP_sf"/>
</dbReference>
<dbReference type="NCBIfam" id="TIGR00263">
    <property type="entry name" value="trpB"/>
    <property type="match status" value="1"/>
</dbReference>
<dbReference type="PANTHER" id="PTHR48077:SF3">
    <property type="entry name" value="TRYPTOPHAN SYNTHASE"/>
    <property type="match status" value="1"/>
</dbReference>
<dbReference type="PANTHER" id="PTHR48077">
    <property type="entry name" value="TRYPTOPHAN SYNTHASE-RELATED"/>
    <property type="match status" value="1"/>
</dbReference>
<dbReference type="Pfam" id="PF00291">
    <property type="entry name" value="PALP"/>
    <property type="match status" value="1"/>
</dbReference>
<dbReference type="PIRSF" id="PIRSF001413">
    <property type="entry name" value="Trp_syn_beta"/>
    <property type="match status" value="1"/>
</dbReference>
<dbReference type="SUPFAM" id="SSF53686">
    <property type="entry name" value="Tryptophan synthase beta subunit-like PLP-dependent enzymes"/>
    <property type="match status" value="1"/>
</dbReference>
<dbReference type="PROSITE" id="PS00168">
    <property type="entry name" value="TRP_SYNTHASE_BETA"/>
    <property type="match status" value="1"/>
</dbReference>
<comment type="function">
    <text evidence="1">The beta subunit is responsible for the synthesis of L-tryptophan from indole and L-serine.</text>
</comment>
<comment type="catalytic activity">
    <reaction evidence="1">
        <text>(1S,2R)-1-C-(indol-3-yl)glycerol 3-phosphate + L-serine = D-glyceraldehyde 3-phosphate + L-tryptophan + H2O</text>
        <dbReference type="Rhea" id="RHEA:10532"/>
        <dbReference type="ChEBI" id="CHEBI:15377"/>
        <dbReference type="ChEBI" id="CHEBI:33384"/>
        <dbReference type="ChEBI" id="CHEBI:57912"/>
        <dbReference type="ChEBI" id="CHEBI:58866"/>
        <dbReference type="ChEBI" id="CHEBI:59776"/>
        <dbReference type="EC" id="4.2.1.20"/>
    </reaction>
</comment>
<comment type="cofactor">
    <cofactor evidence="1">
        <name>pyridoxal 5'-phosphate</name>
        <dbReference type="ChEBI" id="CHEBI:597326"/>
    </cofactor>
</comment>
<comment type="pathway">
    <text evidence="1">Amino-acid biosynthesis; L-tryptophan biosynthesis; L-tryptophan from chorismate: step 5/5.</text>
</comment>
<comment type="subunit">
    <text evidence="1">Tetramer of two alpha and two beta chains.</text>
</comment>
<comment type="similarity">
    <text evidence="1">Belongs to the TrpB family.</text>
</comment>
<proteinExistence type="inferred from homology"/>
<accession>A4Y845</accession>
<keyword id="KW-0028">Amino-acid biosynthesis</keyword>
<keyword id="KW-0057">Aromatic amino acid biosynthesis</keyword>
<keyword id="KW-0456">Lyase</keyword>
<keyword id="KW-0663">Pyridoxal phosphate</keyword>
<keyword id="KW-0822">Tryptophan biosynthesis</keyword>
<feature type="chain" id="PRO_1000018391" description="Tryptophan synthase beta chain">
    <location>
        <begin position="1"/>
        <end position="396"/>
    </location>
</feature>
<feature type="modified residue" description="N6-(pyridoxal phosphate)lysine" evidence="1">
    <location>
        <position position="88"/>
    </location>
</feature>
<reference key="1">
    <citation type="submission" date="2007-04" db="EMBL/GenBank/DDBJ databases">
        <title>Complete sequence of Shewanella putrefaciens CN-32.</title>
        <authorList>
            <consortium name="US DOE Joint Genome Institute"/>
            <person name="Copeland A."/>
            <person name="Lucas S."/>
            <person name="Lapidus A."/>
            <person name="Barry K."/>
            <person name="Detter J.C."/>
            <person name="Glavina del Rio T."/>
            <person name="Hammon N."/>
            <person name="Israni S."/>
            <person name="Dalin E."/>
            <person name="Tice H."/>
            <person name="Pitluck S."/>
            <person name="Chain P."/>
            <person name="Malfatti S."/>
            <person name="Shin M."/>
            <person name="Vergez L."/>
            <person name="Schmutz J."/>
            <person name="Larimer F."/>
            <person name="Land M."/>
            <person name="Hauser L."/>
            <person name="Kyrpides N."/>
            <person name="Mikhailova N."/>
            <person name="Romine M.F."/>
            <person name="Fredrickson J."/>
            <person name="Tiedje J."/>
            <person name="Richardson P."/>
        </authorList>
    </citation>
    <scope>NUCLEOTIDE SEQUENCE [LARGE SCALE GENOMIC DNA]</scope>
    <source>
        <strain>CN-32 / ATCC BAA-453</strain>
    </source>
</reference>
<sequence length="396" mass="42783">MSTLKLNPYFGEYGGMYVPQILVPALKQLETAFVEAQEDEDFKAEFTDLLKNYAGRPTALTLTRNLSPNPMVKIYLKREDLLHGGAHKTNQVLGQALLAKRMGKKEIIAETGAGQHGVATALACALLGLKCKVYMGAKDVARQSPNVFRMRLMGAEVIPVTSGSATLKDACNEAMRDWSGSYEKAHYLLGTAAGPHPFPTIVREFQRIIGEETKKQMLEREGRLPDAVIACVGGGSNAIGMFADFIDEPSVELIGVEPAGKGIDTPMHGAPLKHGKTGIFFGMKAPLMQDSEGQIEESYSISAGLDFPSVGPQHAHLNATGRARYESATDDEALEAFQQLARCEGIIPALESAHAIAYAVKMARECTKETILVVNLSGRGDKDIFTVSDILNGKEV</sequence>
<name>TRPB_SHEPC</name>